<proteinExistence type="evidence at protein level"/>
<organism>
    <name type="scientific">Homo sapiens</name>
    <name type="common">Human</name>
    <dbReference type="NCBI Taxonomy" id="9606"/>
    <lineage>
        <taxon>Eukaryota</taxon>
        <taxon>Metazoa</taxon>
        <taxon>Chordata</taxon>
        <taxon>Craniata</taxon>
        <taxon>Vertebrata</taxon>
        <taxon>Euteleostomi</taxon>
        <taxon>Mammalia</taxon>
        <taxon>Eutheria</taxon>
        <taxon>Euarchontoglires</taxon>
        <taxon>Primates</taxon>
        <taxon>Haplorrhini</taxon>
        <taxon>Catarrhini</taxon>
        <taxon>Hominidae</taxon>
        <taxon>Homo</taxon>
    </lineage>
</organism>
<keyword id="KW-0225">Disease variant</keyword>
<keyword id="KW-0407">Ion channel</keyword>
<keyword id="KW-0406">Ion transport</keyword>
<keyword id="KW-0454">Long QT syndrome</keyword>
<keyword id="KW-0472">Membrane</keyword>
<keyword id="KW-0597">Phosphoprotein</keyword>
<keyword id="KW-0630">Potassium</keyword>
<keyword id="KW-0633">Potassium transport</keyword>
<keyword id="KW-1267">Proteomics identification</keyword>
<keyword id="KW-1185">Reference proteome</keyword>
<keyword id="KW-0812">Transmembrane</keyword>
<keyword id="KW-1133">Transmembrane helix</keyword>
<keyword id="KW-0813">Transport</keyword>
<keyword id="KW-0851">Voltage-gated channel</keyword>
<name>KCNJ5_HUMAN</name>
<dbReference type="EMBL" id="X83582">
    <property type="protein sequence ID" value="CAA58565.1"/>
    <property type="molecule type" value="mRNA"/>
</dbReference>
<dbReference type="EMBL" id="U39195">
    <property type="protein sequence ID" value="AAB53093.1"/>
    <property type="molecule type" value="mRNA"/>
</dbReference>
<dbReference type="EMBL" id="L47208">
    <property type="protein sequence ID" value="AAB07269.1"/>
    <property type="molecule type" value="mRNA"/>
</dbReference>
<dbReference type="EMBL" id="U52154">
    <property type="protein sequence ID" value="AAB07045.1"/>
    <property type="molecule type" value="mRNA"/>
</dbReference>
<dbReference type="EMBL" id="D50134">
    <property type="protein sequence ID" value="BAA08814.1"/>
    <property type="molecule type" value="mRNA"/>
</dbReference>
<dbReference type="EMBL" id="AP000920">
    <property type="status" value="NOT_ANNOTATED_CDS"/>
    <property type="molecule type" value="Genomic_DNA"/>
</dbReference>
<dbReference type="EMBL" id="AK312837">
    <property type="protein sequence ID" value="BAG35691.1"/>
    <property type="molecule type" value="mRNA"/>
</dbReference>
<dbReference type="EMBL" id="BC069571">
    <property type="protein sequence ID" value="AAH69571.1"/>
    <property type="molecule type" value="mRNA"/>
</dbReference>
<dbReference type="EMBL" id="BC074838">
    <property type="protein sequence ID" value="AAH74838.2"/>
    <property type="molecule type" value="mRNA"/>
</dbReference>
<dbReference type="EMBL" id="BC069386">
    <property type="protein sequence ID" value="AAH69386.1"/>
    <property type="molecule type" value="mRNA"/>
</dbReference>
<dbReference type="EMBL" id="BC069482">
    <property type="protein sequence ID" value="AAH69482.1"/>
    <property type="molecule type" value="mRNA"/>
</dbReference>
<dbReference type="EMBL" id="BC069499">
    <property type="protein sequence ID" value="AAH69499.1"/>
    <property type="molecule type" value="mRNA"/>
</dbReference>
<dbReference type="EMBL" id="BC074839">
    <property type="protein sequence ID" value="AAH74839.2"/>
    <property type="molecule type" value="mRNA"/>
</dbReference>
<dbReference type="CCDS" id="CCDS8479.1"/>
<dbReference type="PIR" id="G02232">
    <property type="entry name" value="G02232"/>
</dbReference>
<dbReference type="RefSeq" id="NP_000881.3">
    <property type="nucleotide sequence ID" value="NM_000890.3"/>
</dbReference>
<dbReference type="RefSeq" id="NP_001341098.1">
    <property type="nucleotide sequence ID" value="NM_001354169.2"/>
</dbReference>
<dbReference type="RefSeq" id="XP_011541111.1">
    <property type="nucleotide sequence ID" value="XM_011542809.2"/>
</dbReference>
<dbReference type="RefSeq" id="XP_011541112.1">
    <property type="nucleotide sequence ID" value="XM_011542810.4"/>
</dbReference>
<dbReference type="EMDB" id="EMD-22201"/>
<dbReference type="EMDB" id="EMD-22202"/>
<dbReference type="SMR" id="P48544"/>
<dbReference type="BioGRID" id="109964">
    <property type="interactions" value="20"/>
</dbReference>
<dbReference type="ComplexPortal" id="CPX-3278">
    <property type="entry name" value="I(KACh) inward rectifier potassium channel complex"/>
</dbReference>
<dbReference type="FunCoup" id="P48544">
    <property type="interactions" value="587"/>
</dbReference>
<dbReference type="IntAct" id="P48544">
    <property type="interactions" value="17"/>
</dbReference>
<dbReference type="MINT" id="P48544"/>
<dbReference type="STRING" id="9606.ENSP00000433295"/>
<dbReference type="BindingDB" id="P48544"/>
<dbReference type="ChEMBL" id="CHEMBL1914278"/>
<dbReference type="DrugBank" id="DB00898">
    <property type="generic name" value="Ethanol"/>
</dbReference>
<dbReference type="DrugBank" id="DB08954">
    <property type="generic name" value="Ifenprodil"/>
</dbReference>
<dbReference type="DrugBank" id="DB17045">
    <property type="generic name" value="Phorbol 12-myristate 13-acetate diester"/>
</dbReference>
<dbReference type="DrugCentral" id="P48544"/>
<dbReference type="GuidetoPHARMACOLOGY" id="437"/>
<dbReference type="TCDB" id="1.A.2.1.3">
    <property type="family name" value="the inward rectifier k(+) channel (irk-c) family"/>
</dbReference>
<dbReference type="GlyGen" id="P48544">
    <property type="glycosylation" value="1 site"/>
</dbReference>
<dbReference type="iPTMnet" id="P48544"/>
<dbReference type="PhosphoSitePlus" id="P48544"/>
<dbReference type="BioMuta" id="KCNJ5"/>
<dbReference type="DMDM" id="296434543"/>
<dbReference type="MassIVE" id="P48544"/>
<dbReference type="PaxDb" id="9606-ENSP00000433295"/>
<dbReference type="PeptideAtlas" id="P48544"/>
<dbReference type="ProteomicsDB" id="55900"/>
<dbReference type="Antibodypedia" id="2997">
    <property type="antibodies" value="208 antibodies from 29 providers"/>
</dbReference>
<dbReference type="DNASU" id="3762"/>
<dbReference type="Ensembl" id="ENST00000338350.4">
    <property type="protein sequence ID" value="ENSP00000339960.4"/>
    <property type="gene ID" value="ENSG00000120457.12"/>
</dbReference>
<dbReference type="Ensembl" id="ENST00000529694.6">
    <property type="protein sequence ID" value="ENSP00000433295.1"/>
    <property type="gene ID" value="ENSG00000120457.12"/>
</dbReference>
<dbReference type="Ensembl" id="ENST00000533599.1">
    <property type="protein sequence ID" value="ENSP00000434266.1"/>
    <property type="gene ID" value="ENSG00000120457.12"/>
</dbReference>
<dbReference type="GeneID" id="3762"/>
<dbReference type="KEGG" id="hsa:3762"/>
<dbReference type="MANE-Select" id="ENST00000529694.6">
    <property type="protein sequence ID" value="ENSP00000433295.1"/>
    <property type="RefSeq nucleotide sequence ID" value="NM_000890.5"/>
    <property type="RefSeq protein sequence ID" value="NP_000881.3"/>
</dbReference>
<dbReference type="UCSC" id="uc001qet.4">
    <property type="organism name" value="human"/>
</dbReference>
<dbReference type="AGR" id="HGNC:6266"/>
<dbReference type="CTD" id="3762"/>
<dbReference type="DisGeNET" id="3762"/>
<dbReference type="GeneCards" id="KCNJ5"/>
<dbReference type="GeneReviews" id="KCNJ5"/>
<dbReference type="HGNC" id="HGNC:6266">
    <property type="gene designation" value="KCNJ5"/>
</dbReference>
<dbReference type="HPA" id="ENSG00000120457">
    <property type="expression patterns" value="Tissue enhanced (adrenal gland, pancreas)"/>
</dbReference>
<dbReference type="MalaCards" id="KCNJ5"/>
<dbReference type="MIM" id="600734">
    <property type="type" value="gene"/>
</dbReference>
<dbReference type="MIM" id="613485">
    <property type="type" value="phenotype"/>
</dbReference>
<dbReference type="MIM" id="613677">
    <property type="type" value="phenotype"/>
</dbReference>
<dbReference type="neXtProt" id="NX_P48544"/>
<dbReference type="OpenTargets" id="ENSG00000120457"/>
<dbReference type="Orphanet" id="37553">
    <property type="disease" value="Andersen-Tawil syndrome"/>
</dbReference>
<dbReference type="Orphanet" id="334">
    <property type="disease" value="Familial atrial fibrillation"/>
</dbReference>
<dbReference type="Orphanet" id="251274">
    <property type="disease" value="Familial hyperaldosteronism type III"/>
</dbReference>
<dbReference type="Orphanet" id="101016">
    <property type="disease" value="Romano-Ward syndrome"/>
</dbReference>
<dbReference type="PharmGKB" id="PA216"/>
<dbReference type="VEuPathDB" id="HostDB:ENSG00000120457"/>
<dbReference type="eggNOG" id="KOG3827">
    <property type="taxonomic scope" value="Eukaryota"/>
</dbReference>
<dbReference type="GeneTree" id="ENSGT01080000257365"/>
<dbReference type="HOGENOM" id="CLU_022738_11_0_1"/>
<dbReference type="InParanoid" id="P48544"/>
<dbReference type="OMA" id="ISMRDDK"/>
<dbReference type="OrthoDB" id="273257at2759"/>
<dbReference type="PAN-GO" id="P48544">
    <property type="GO annotations" value="3 GO annotations based on evolutionary models"/>
</dbReference>
<dbReference type="PhylomeDB" id="P48544"/>
<dbReference type="TreeFam" id="TF313676"/>
<dbReference type="PathwayCommons" id="P48544"/>
<dbReference type="Reactome" id="R-HSA-1296041">
    <property type="pathway name" value="Activation of G protein gated Potassium channels"/>
</dbReference>
<dbReference type="Reactome" id="R-HSA-997272">
    <property type="pathway name" value="Inhibition of voltage gated Ca2+ channels via Gbeta/gamma subunits"/>
</dbReference>
<dbReference type="SignaLink" id="P48544"/>
<dbReference type="SIGNOR" id="P48544"/>
<dbReference type="BioGRID-ORCS" id="3762">
    <property type="hits" value="7 hits in 1151 CRISPR screens"/>
</dbReference>
<dbReference type="ChiTaRS" id="KCNJ5">
    <property type="organism name" value="human"/>
</dbReference>
<dbReference type="GeneWiki" id="KCNJ5"/>
<dbReference type="GenomeRNAi" id="3762"/>
<dbReference type="Pharos" id="P48544">
    <property type="development level" value="Tchem"/>
</dbReference>
<dbReference type="PRO" id="PR:P48544"/>
<dbReference type="Proteomes" id="UP000005640">
    <property type="component" value="Chromosome 11"/>
</dbReference>
<dbReference type="RNAct" id="P48544">
    <property type="molecule type" value="protein"/>
</dbReference>
<dbReference type="Bgee" id="ENSG00000120457">
    <property type="expression patterns" value="Expressed in buccal mucosa cell and 142 other cell types or tissues"/>
</dbReference>
<dbReference type="ExpressionAtlas" id="P48544">
    <property type="expression patterns" value="baseline and differential"/>
</dbReference>
<dbReference type="GO" id="GO:1990566">
    <property type="term" value="C:I(KACh) inward rectifier potassium channel complex"/>
    <property type="evidence" value="ECO:0000266"/>
    <property type="project" value="ComplexPortal"/>
</dbReference>
<dbReference type="GO" id="GO:0005886">
    <property type="term" value="C:plasma membrane"/>
    <property type="evidence" value="ECO:0000318"/>
    <property type="project" value="GO_Central"/>
</dbReference>
<dbReference type="GO" id="GO:0008076">
    <property type="term" value="C:voltage-gated potassium channel complex"/>
    <property type="evidence" value="ECO:0000314"/>
    <property type="project" value="BHF-UCL"/>
</dbReference>
<dbReference type="GO" id="GO:0015467">
    <property type="term" value="F:G-protein activated inward rectifier potassium channel activity"/>
    <property type="evidence" value="ECO:0000314"/>
    <property type="project" value="UniProtKB"/>
</dbReference>
<dbReference type="GO" id="GO:0005242">
    <property type="term" value="F:inward rectifier potassium channel activity"/>
    <property type="evidence" value="ECO:0000315"/>
    <property type="project" value="UniProtKB"/>
</dbReference>
<dbReference type="GO" id="GO:0086089">
    <property type="term" value="F:voltage-gated potassium channel activity involved in atrial cardiac muscle cell action potential repolarization"/>
    <property type="evidence" value="ECO:0000315"/>
    <property type="project" value="BHF-UCL"/>
</dbReference>
<dbReference type="GO" id="GO:1902282">
    <property type="term" value="F:voltage-gated potassium channel activity involved in ventricular cardiac muscle cell action potential repolarization"/>
    <property type="evidence" value="ECO:0000305"/>
    <property type="project" value="BHF-UCL"/>
</dbReference>
<dbReference type="GO" id="GO:0098914">
    <property type="term" value="P:membrane repolarization during atrial cardiac muscle cell action potential"/>
    <property type="evidence" value="ECO:0000315"/>
    <property type="project" value="BHF-UCL"/>
</dbReference>
<dbReference type="GO" id="GO:1990573">
    <property type="term" value="P:potassium ion import across plasma membrane"/>
    <property type="evidence" value="ECO:0000314"/>
    <property type="project" value="BHF-UCL"/>
</dbReference>
<dbReference type="GO" id="GO:0071805">
    <property type="term" value="P:potassium ion transmembrane transport"/>
    <property type="evidence" value="ECO:0000303"/>
    <property type="project" value="ComplexPortal"/>
</dbReference>
<dbReference type="GO" id="GO:0006813">
    <property type="term" value="P:potassium ion transport"/>
    <property type="evidence" value="ECO:0000304"/>
    <property type="project" value="ProtInc"/>
</dbReference>
<dbReference type="GO" id="GO:0086091">
    <property type="term" value="P:regulation of heart rate by cardiac conduction"/>
    <property type="evidence" value="ECO:0000315"/>
    <property type="project" value="BHF-UCL"/>
</dbReference>
<dbReference type="GO" id="GO:0034765">
    <property type="term" value="P:regulation of monoatomic ion transmembrane transport"/>
    <property type="evidence" value="ECO:0000318"/>
    <property type="project" value="GO_Central"/>
</dbReference>
<dbReference type="GO" id="GO:0099625">
    <property type="term" value="P:ventricular cardiac muscle cell membrane repolarization"/>
    <property type="evidence" value="ECO:0000305"/>
    <property type="project" value="BHF-UCL"/>
</dbReference>
<dbReference type="FunFam" id="1.10.287.70:FF:000019">
    <property type="entry name" value="G protein-activated inward rectifier potassium channel 1"/>
    <property type="match status" value="1"/>
</dbReference>
<dbReference type="FunFam" id="2.60.40.1400:FF:000005">
    <property type="entry name" value="G protein-activated inward rectifier potassium channel 2"/>
    <property type="match status" value="1"/>
</dbReference>
<dbReference type="Gene3D" id="1.10.287.70">
    <property type="match status" value="1"/>
</dbReference>
<dbReference type="Gene3D" id="2.60.40.1400">
    <property type="entry name" value="G protein-activated inward rectifier potassium channel 1"/>
    <property type="match status" value="1"/>
</dbReference>
<dbReference type="InterPro" id="IPR014756">
    <property type="entry name" value="Ig_E-set"/>
</dbReference>
<dbReference type="InterPro" id="IPR041647">
    <property type="entry name" value="IRK_C"/>
</dbReference>
<dbReference type="InterPro" id="IPR016449">
    <property type="entry name" value="K_chnl_inward-rec_Kir"/>
</dbReference>
<dbReference type="InterPro" id="IPR003277">
    <property type="entry name" value="K_chnl_inward-rec_Kir3.4"/>
</dbReference>
<dbReference type="InterPro" id="IPR013518">
    <property type="entry name" value="K_chnl_inward-rec_Kir_cyto"/>
</dbReference>
<dbReference type="InterPro" id="IPR040445">
    <property type="entry name" value="Kir_TM"/>
</dbReference>
<dbReference type="PANTHER" id="PTHR11767:SF52">
    <property type="entry name" value="G PROTEIN-ACTIVATED INWARD RECTIFIER POTASSIUM CHANNEL 4"/>
    <property type="match status" value="1"/>
</dbReference>
<dbReference type="PANTHER" id="PTHR11767">
    <property type="entry name" value="INWARD RECTIFIER POTASSIUM CHANNEL"/>
    <property type="match status" value="1"/>
</dbReference>
<dbReference type="Pfam" id="PF01007">
    <property type="entry name" value="IRK"/>
    <property type="match status" value="1"/>
</dbReference>
<dbReference type="Pfam" id="PF17655">
    <property type="entry name" value="IRK_C"/>
    <property type="match status" value="1"/>
</dbReference>
<dbReference type="PIRSF" id="PIRSF005465">
    <property type="entry name" value="GIRK_kir"/>
    <property type="match status" value="1"/>
</dbReference>
<dbReference type="PRINTS" id="PR01330">
    <property type="entry name" value="KIR34CHANNEL"/>
</dbReference>
<dbReference type="PRINTS" id="PR01320">
    <property type="entry name" value="KIRCHANNEL"/>
</dbReference>
<dbReference type="SUPFAM" id="SSF81296">
    <property type="entry name" value="E set domains"/>
    <property type="match status" value="1"/>
</dbReference>
<dbReference type="SUPFAM" id="SSF81324">
    <property type="entry name" value="Voltage-gated potassium channels"/>
    <property type="match status" value="1"/>
</dbReference>
<sequence length="419" mass="47668">MAGDSRNAMNQDMEIGVTPWDPKKIPKQARDYVPIATDRTRLLAEGKKPRQRYMEKSGKCNVHHGNVQETYRYLSDLFTTLVDLKWRFNLLVFTMVYTVTWLFFGFIWWLIAYIRGDLDHVGDQEWIPCVENLSGFVSAFLFSIETETTIGYGFRVITEKCPEGIILLLVQAILGSIVNAFMVGCMFVKISQPKKRAETLMFSNNAVISMRDEKLCLMFRVGDLRNSHIVEASIRAKLIKSRQTKEGEFIPLNQTDINVGFDTGDDRLFLVSPLIISHEINQKSPFWEMSQAQLHQEEFEVVVILEGMVEATGMTCQARSSYMDTEVLWGHRFTPVLTLEKGFYEVDYNTFHDTYETNTPSCCAKELAEMKREGRLLQYLPSPPLLGGCAEAGLDAEAEQNEEDEPKGLGGSREARGSV</sequence>
<reference key="1">
    <citation type="journal article" date="1994" name="Nature">
        <title>Cloning and functional expression of a rat heart KATP channel.</title>
        <authorList>
            <person name="Ashford M.L.J."/>
            <person name="Bond C.T."/>
            <person name="Blair T.A."/>
            <person name="Adelman J.P."/>
        </authorList>
    </citation>
    <scope>NUCLEOTIDE SEQUENCE [MRNA]</scope>
    <scope>RETRACTED PAPER</scope>
    <scope>VARIANT GLU-282</scope>
</reference>
<reference key="2">
    <citation type="journal article" date="1995" name="Nature">
        <authorList>
            <person name="Ashford M.L.J."/>
            <person name="Bond C.T."/>
            <person name="Blair T.A."/>
            <person name="Adelman J.P."/>
        </authorList>
    </citation>
    <scope>ERRATUM OF PUBMED:8047164</scope>
    <scope>RETRACTION NOTICE OF PUBMED:8047164</scope>
</reference>
<reference key="3">
    <citation type="journal article" date="1996" name="J. Gen. Physiol.">
        <title>A recombinant inwardly rectifying potassium channel coupled to GTP-binding proteins.</title>
        <authorList>
            <person name="Chan K.W."/>
            <person name="Langan M.N."/>
            <person name="Sui J."/>
            <person name="Kozak A."/>
            <person name="Pabon A."/>
            <person name="Ladias J.A.A."/>
            <person name="Logothetis D.E."/>
        </authorList>
    </citation>
    <scope>NUCLEOTIDE SEQUENCE [MRNA]</scope>
    <scope>VARIANT GLU-282</scope>
    <scope>FUNCTION</scope>
    <scope>TRANSPORTER ACTIVITY</scope>
    <scope>SUBUNIT</scope>
    <source>
        <tissue>Pancreas</tissue>
    </source>
</reference>
<reference key="4">
    <citation type="journal article" date="1996" name="J. Neurosci.">
        <title>A G-protein-activated inwardly rectifying K+ channel (GIRK4) from human hippocampus associates with other GIRK channels.</title>
        <authorList>
            <person name="Spauschus A."/>
            <person name="Lentes K.U."/>
            <person name="Wischmeyer E."/>
            <person name="Dissmann E."/>
            <person name="Karschin C."/>
            <person name="Karschin A."/>
        </authorList>
    </citation>
    <scope>NUCLEOTIDE SEQUENCE [MRNA]</scope>
    <scope>VARIANT GLU-282</scope>
    <scope>FUNCTION</scope>
    <scope>TRANSPORTER ACTIVITY</scope>
    <scope>SUBUNIT</scope>
</reference>
<reference key="5">
    <citation type="journal article" date="1999" name="Cell. Signal.">
        <title>Co-expression of human Kir3 subunits can yield channels with different functional properties.</title>
        <authorList>
            <person name="Schoots O."/>
            <person name="Wilson J.M."/>
            <person name="Ethier N."/>
            <person name="Bigras E."/>
            <person name="Hebert T.E."/>
            <person name="Van Tol H.H.M."/>
        </authorList>
    </citation>
    <scope>NUCLEOTIDE SEQUENCE [MRNA]</scope>
    <scope>VARIANT GLU-282</scope>
    <scope>SUBUNIT</scope>
    <source>
        <tissue>Pituitary</tissue>
    </source>
</reference>
<reference key="6">
    <citation type="journal article" date="1995" name="Recept. Channels">
        <title>Functional characterization and localization of a cardiac-type inwardly rectifying K+ channel.</title>
        <authorList>
            <person name="Iizuka M."/>
            <person name="Kubo Y."/>
            <person name="Tsunenari I."/>
            <person name="Pan C.X."/>
            <person name="Akiba I."/>
            <person name="Kono T."/>
        </authorList>
    </citation>
    <scope>NUCLEOTIDE SEQUENCE [MRNA]</scope>
    <scope>VARIANT GLU-282</scope>
    <source>
        <tissue>Heart</tissue>
    </source>
</reference>
<reference key="7">
    <citation type="journal article" date="2004" name="Nat. Genet.">
        <title>Complete sequencing and characterization of 21,243 full-length human cDNAs.</title>
        <authorList>
            <person name="Ota T."/>
            <person name="Suzuki Y."/>
            <person name="Nishikawa T."/>
            <person name="Otsuki T."/>
            <person name="Sugiyama T."/>
            <person name="Irie R."/>
            <person name="Wakamatsu A."/>
            <person name="Hayashi K."/>
            <person name="Sato H."/>
            <person name="Nagai K."/>
            <person name="Kimura K."/>
            <person name="Makita H."/>
            <person name="Sekine M."/>
            <person name="Obayashi M."/>
            <person name="Nishi T."/>
            <person name="Shibahara T."/>
            <person name="Tanaka T."/>
            <person name="Ishii S."/>
            <person name="Yamamoto J."/>
            <person name="Saito K."/>
            <person name="Kawai Y."/>
            <person name="Isono Y."/>
            <person name="Nakamura Y."/>
            <person name="Nagahari K."/>
            <person name="Murakami K."/>
            <person name="Yasuda T."/>
            <person name="Iwayanagi T."/>
            <person name="Wagatsuma M."/>
            <person name="Shiratori A."/>
            <person name="Sudo H."/>
            <person name="Hosoiri T."/>
            <person name="Kaku Y."/>
            <person name="Kodaira H."/>
            <person name="Kondo H."/>
            <person name="Sugawara M."/>
            <person name="Takahashi M."/>
            <person name="Kanda K."/>
            <person name="Yokoi T."/>
            <person name="Furuya T."/>
            <person name="Kikkawa E."/>
            <person name="Omura Y."/>
            <person name="Abe K."/>
            <person name="Kamihara K."/>
            <person name="Katsuta N."/>
            <person name="Sato K."/>
            <person name="Tanikawa M."/>
            <person name="Yamazaki M."/>
            <person name="Ninomiya K."/>
            <person name="Ishibashi T."/>
            <person name="Yamashita H."/>
            <person name="Murakawa K."/>
            <person name="Fujimori K."/>
            <person name="Tanai H."/>
            <person name="Kimata M."/>
            <person name="Watanabe M."/>
            <person name="Hiraoka S."/>
            <person name="Chiba Y."/>
            <person name="Ishida S."/>
            <person name="Ono Y."/>
            <person name="Takiguchi S."/>
            <person name="Watanabe S."/>
            <person name="Yosida M."/>
            <person name="Hotuta T."/>
            <person name="Kusano J."/>
            <person name="Kanehori K."/>
            <person name="Takahashi-Fujii A."/>
            <person name="Hara H."/>
            <person name="Tanase T.-O."/>
            <person name="Nomura Y."/>
            <person name="Togiya S."/>
            <person name="Komai F."/>
            <person name="Hara R."/>
            <person name="Takeuchi K."/>
            <person name="Arita M."/>
            <person name="Imose N."/>
            <person name="Musashino K."/>
            <person name="Yuuki H."/>
            <person name="Oshima A."/>
            <person name="Sasaki N."/>
            <person name="Aotsuka S."/>
            <person name="Yoshikawa Y."/>
            <person name="Matsunawa H."/>
            <person name="Ichihara T."/>
            <person name="Shiohata N."/>
            <person name="Sano S."/>
            <person name="Moriya S."/>
            <person name="Momiyama H."/>
            <person name="Satoh N."/>
            <person name="Takami S."/>
            <person name="Terashima Y."/>
            <person name="Suzuki O."/>
            <person name="Nakagawa S."/>
            <person name="Senoh A."/>
            <person name="Mizoguchi H."/>
            <person name="Goto Y."/>
            <person name="Shimizu F."/>
            <person name="Wakebe H."/>
            <person name="Hishigaki H."/>
            <person name="Watanabe T."/>
            <person name="Sugiyama A."/>
            <person name="Takemoto M."/>
            <person name="Kawakami B."/>
            <person name="Yamazaki M."/>
            <person name="Watanabe K."/>
            <person name="Kumagai A."/>
            <person name="Itakura S."/>
            <person name="Fukuzumi Y."/>
            <person name="Fujimori Y."/>
            <person name="Komiyama M."/>
            <person name="Tashiro H."/>
            <person name="Tanigami A."/>
            <person name="Fujiwara T."/>
            <person name="Ono T."/>
            <person name="Yamada K."/>
            <person name="Fujii Y."/>
            <person name="Ozaki K."/>
            <person name="Hirao M."/>
            <person name="Ohmori Y."/>
            <person name="Kawabata A."/>
            <person name="Hikiji T."/>
            <person name="Kobatake N."/>
            <person name="Inagaki H."/>
            <person name="Ikema Y."/>
            <person name="Okamoto S."/>
            <person name="Okitani R."/>
            <person name="Kawakami T."/>
            <person name="Noguchi S."/>
            <person name="Itoh T."/>
            <person name="Shigeta K."/>
            <person name="Senba T."/>
            <person name="Matsumura K."/>
            <person name="Nakajima Y."/>
            <person name="Mizuno T."/>
            <person name="Morinaga M."/>
            <person name="Sasaki M."/>
            <person name="Togashi T."/>
            <person name="Oyama M."/>
            <person name="Hata H."/>
            <person name="Watanabe M."/>
            <person name="Komatsu T."/>
            <person name="Mizushima-Sugano J."/>
            <person name="Satoh T."/>
            <person name="Shirai Y."/>
            <person name="Takahashi Y."/>
            <person name="Nakagawa K."/>
            <person name="Okumura K."/>
            <person name="Nagase T."/>
            <person name="Nomura N."/>
            <person name="Kikuchi H."/>
            <person name="Masuho Y."/>
            <person name="Yamashita R."/>
            <person name="Nakai K."/>
            <person name="Yada T."/>
            <person name="Nakamura Y."/>
            <person name="Ohara O."/>
            <person name="Isogai T."/>
            <person name="Sugano S."/>
        </authorList>
    </citation>
    <scope>NUCLEOTIDE SEQUENCE [LARGE SCALE MRNA]</scope>
    <source>
        <tissue>Thymus</tissue>
    </source>
</reference>
<reference key="8">
    <citation type="journal article" date="2006" name="Nature">
        <title>Human chromosome 11 DNA sequence and analysis including novel gene identification.</title>
        <authorList>
            <person name="Taylor T.D."/>
            <person name="Noguchi H."/>
            <person name="Totoki Y."/>
            <person name="Toyoda A."/>
            <person name="Kuroki Y."/>
            <person name="Dewar K."/>
            <person name="Lloyd C."/>
            <person name="Itoh T."/>
            <person name="Takeda T."/>
            <person name="Kim D.-W."/>
            <person name="She X."/>
            <person name="Barlow K.F."/>
            <person name="Bloom T."/>
            <person name="Bruford E."/>
            <person name="Chang J.L."/>
            <person name="Cuomo C.A."/>
            <person name="Eichler E."/>
            <person name="FitzGerald M.G."/>
            <person name="Jaffe D.B."/>
            <person name="LaButti K."/>
            <person name="Nicol R."/>
            <person name="Park H.-S."/>
            <person name="Seaman C."/>
            <person name="Sougnez C."/>
            <person name="Yang X."/>
            <person name="Zimmer A.R."/>
            <person name="Zody M.C."/>
            <person name="Birren B.W."/>
            <person name="Nusbaum C."/>
            <person name="Fujiyama A."/>
            <person name="Hattori M."/>
            <person name="Rogers J."/>
            <person name="Lander E.S."/>
            <person name="Sakaki Y."/>
        </authorList>
    </citation>
    <scope>NUCLEOTIDE SEQUENCE [LARGE SCALE GENOMIC DNA]</scope>
</reference>
<reference key="9">
    <citation type="journal article" date="2004" name="Genome Res.">
        <title>The status, quality, and expansion of the NIH full-length cDNA project: the Mammalian Gene Collection (MGC).</title>
        <authorList>
            <consortium name="The MGC Project Team"/>
        </authorList>
    </citation>
    <scope>NUCLEOTIDE SEQUENCE [LARGE SCALE MRNA]</scope>
    <scope>VARIANT GLU-282</scope>
    <source>
        <tissue>Lung</tissue>
    </source>
</reference>
<reference key="10">
    <citation type="journal article" date="2011" name="Science">
        <title>K+ channel mutations in adrenal aldosterone-producing adenomas and hereditary hypertension.</title>
        <authorList>
            <person name="Choi M."/>
            <person name="Scholl U.I."/>
            <person name="Yue P."/>
            <person name="Bjorklund P."/>
            <person name="Zhao B."/>
            <person name="Nelson-Williams C."/>
            <person name="Ji W."/>
            <person name="Cho Y."/>
            <person name="Patel A."/>
            <person name="Men C.J."/>
            <person name="Lolis E."/>
            <person name="Wisgerhof M.V."/>
            <person name="Geller D.S."/>
            <person name="Mane S."/>
            <person name="Hellman P."/>
            <person name="Westin G."/>
            <person name="Akerstrom G."/>
            <person name="Wang W."/>
            <person name="Carling T."/>
            <person name="Lifton R.P."/>
        </authorList>
    </citation>
    <scope>TISSUE SPECIFICITY</scope>
    <scope>VARIANTS HALD3 ARG-151 AND ALA-158</scope>
    <scope>VARIANTS HIS-39; ARG-168 AND ILE-210</scope>
    <scope>CHARACTERIZATION OF VARIANT HALD3 ARG-151</scope>
    <scope>CHARACTERIZATION OF VARIANT ARG-168</scope>
    <scope>INVOLVEMENT IN ALDOSTERONISM ASSOCIATED WITH ADRENAL ADENOMAS</scope>
</reference>
<reference key="11">
    <citation type="journal article" date="2010" name="Am. J. Hum. Genet.">
        <title>Identification of a Kir3.4 mutation in congenital long QT syndrome.</title>
        <authorList>
            <person name="Yang Y."/>
            <person name="Yang Y."/>
            <person name="Liang B."/>
            <person name="Liu J."/>
            <person name="Li J."/>
            <person name="Grunnet M."/>
            <person name="Olesen S.P."/>
            <person name="Rasmussen H.B."/>
            <person name="Ellinor P.T."/>
            <person name="Gao L."/>
            <person name="Lin X."/>
            <person name="Li L."/>
            <person name="Wang L."/>
            <person name="Xiao J."/>
            <person name="Liu Y."/>
            <person name="Liu Y."/>
            <person name="Zhang S."/>
            <person name="Liang D."/>
            <person name="Peng L."/>
            <person name="Jespersen T."/>
            <person name="Chen Y.H."/>
        </authorList>
    </citation>
    <scope>VARIANT LQT13 ARG-387</scope>
</reference>
<reference key="12">
    <citation type="journal article" date="2012" name="Endocrinology">
        <title>Potassium channel mutant KCNJ5 T158A expression in HAC-15 cells increases aldosterone synthesis.</title>
        <authorList>
            <person name="Oki K."/>
            <person name="Plonczynski M.W."/>
            <person name="Luis Lam M."/>
            <person name="Gomez-Sanchez E.P."/>
            <person name="Gomez-Sanchez C.E."/>
        </authorList>
    </citation>
    <scope>CHARACTERIZATION OF VARIANT HALD3 ALA-158</scope>
    <scope>FUNCTION</scope>
    <scope>SUBCELLULAR LOCATION</scope>
</reference>
<reference key="13">
    <citation type="journal article" date="2012" name="Hypertension">
        <title>KCNJ5 mutations in European families with nonglucocorticoid remediable familial hyperaldosteronism.</title>
        <authorList>
            <person name="Mulatero P."/>
            <person name="Tauber P."/>
            <person name="Zennaro M.C."/>
            <person name="Monticone S."/>
            <person name="Lang K."/>
            <person name="Beuschlein F."/>
            <person name="Fischer E."/>
            <person name="Tizzani D."/>
            <person name="Pallauf A."/>
            <person name="Viola A."/>
            <person name="Amar L."/>
            <person name="Williams T.A."/>
            <person name="Strom T.M."/>
            <person name="Graf E."/>
            <person name="Bandulik S."/>
            <person name="Penton D."/>
            <person name="Plouin P.F."/>
            <person name="Warth R."/>
            <person name="Allolio B."/>
            <person name="Jeunemaitre X."/>
            <person name="Veglio F."/>
            <person name="Reincke M."/>
        </authorList>
    </citation>
    <scope>VARIANT ARG-168</scope>
    <scope>VARIANTS HALD3 ARG-151; GLU-151 AND ALA-158</scope>
    <scope>CHARACTERIZATION OF VARIANT HALD3 GLU-151</scope>
    <scope>INVOLVEMENT IN ALDOSTERONISM ASSOCIATED WITH ADRENAL ADENOMAS</scope>
</reference>
<reference key="14">
    <citation type="journal article" date="2012" name="Hypertension">
        <title>Prevalence, clinical, and molecular correlates of KCNJ5 mutations in primary aldosteronism.</title>
        <authorList>
            <person name="Boulkroun S."/>
            <person name="Beuschlein F."/>
            <person name="Rossi G.P."/>
            <person name="Golib-Dzib J.F."/>
            <person name="Fischer E."/>
            <person name="Amar L."/>
            <person name="Mulatero P."/>
            <person name="Samson-Couterie B."/>
            <person name="Hahner S."/>
            <person name="Quinkler M."/>
            <person name="Fallo F."/>
            <person name="Letizia C."/>
            <person name="Allolio B."/>
            <person name="Ceolotto G."/>
            <person name="Cicala M.V."/>
            <person name="Lang K."/>
            <person name="Lefebvre H."/>
            <person name="Lenzini L."/>
            <person name="Maniero C."/>
            <person name="Monticone S."/>
            <person name="Perrocheau M."/>
            <person name="Pilon C."/>
            <person name="Plouin P.F."/>
            <person name="Rayes N."/>
            <person name="Seccia T.M."/>
            <person name="Veglio F."/>
            <person name="Williams T.A."/>
            <person name="Zinnamosca L."/>
            <person name="Mantero F."/>
            <person name="Benecke A."/>
            <person name="Jeunemaitre X."/>
            <person name="Reincke M."/>
            <person name="Zennaro M.C."/>
        </authorList>
    </citation>
    <scope>VARIANT HALD3 ARG-151</scope>
    <scope>VARIANT ARG-168</scope>
    <scope>INVOLVEMENT IN ALDOSTERONISM ASSOCIATED WITH ADRENAL ADENOMAS</scope>
</reference>
<reference key="15">
    <citation type="journal article" date="2012" name="J. Clin. Endocrinol. Metab.">
        <title>A novel point mutation in the KCNJ5 gene causing primary hyperaldosteronism and early-onset autosomal dominant hypertension.</title>
        <authorList>
            <person name="Charmandari E."/>
            <person name="Sertedaki A."/>
            <person name="Kino T."/>
            <person name="Merakou C."/>
            <person name="Hoffman D.A."/>
            <person name="Hatch M.M."/>
            <person name="Hurt D.E."/>
            <person name="Lin L."/>
            <person name="Xekouki P."/>
            <person name="Stratakis C.A."/>
            <person name="Chrousos G.P."/>
        </authorList>
    </citation>
    <scope>VARIANT HALD3 SER-157</scope>
    <scope>CHARACTERIZATION OF VARIANTS HALD3 ARG-151; SER-157 AND ALA-158</scope>
    <scope>CHARACTERIZATION OF VARIANT ARG-168</scope>
    <scope>FUNCTION</scope>
    <scope>TRANSPORTER ACTIVITY</scope>
</reference>
<reference key="16">
    <citation type="journal article" date="2012" name="PLoS ONE">
        <title>Comprehensive re-sequencing of adrenal aldosterone producing lesions reveal three somatic mutations near the KCNJ5 potassium channel selectivity filter.</title>
        <authorList>
            <person name="Akerstrom T."/>
            <person name="Crona J."/>
            <person name="Delgado Verdugo A."/>
            <person name="Starker L.F."/>
            <person name="Cupisti K."/>
            <person name="Willenberg H.S."/>
            <person name="Knoefel W.T."/>
            <person name="Saeger W."/>
            <person name="Feller A."/>
            <person name="Ip J."/>
            <person name="Soon P."/>
            <person name="Anlauf M."/>
            <person name="Alesina P.F."/>
            <person name="Schmid K.W."/>
            <person name="Decaussin M."/>
            <person name="Levillain P."/>
            <person name="Wangberg B."/>
            <person name="Peix J.L."/>
            <person name="Robinson B."/>
            <person name="Zedenius J."/>
            <person name="Backdahl M."/>
            <person name="Caramuta S."/>
            <person name="Iwen K.A."/>
            <person name="Botling J."/>
            <person name="Stalberg P."/>
            <person name="Kraimps J.L."/>
            <person name="Dralle H."/>
            <person name="Hellman P."/>
            <person name="Sidhu S."/>
            <person name="Westin G."/>
            <person name="Lehnert H."/>
            <person name="Walz M.K."/>
            <person name="Akerstrom G."/>
            <person name="Carling T."/>
            <person name="Choi M."/>
            <person name="Lifton R.P."/>
            <person name="Bjorklund P."/>
        </authorList>
    </citation>
    <scope>VARIANT HALD3 ARG-151</scope>
    <scope>VARIANTS GLN-145 AND ARG-168</scope>
    <scope>INVOLVEMENT IN ALDOSTERONISM ASSOCIATED WITH ADRENAL ADENOMAS</scope>
</reference>
<reference key="17">
    <citation type="journal article" date="2012" name="Proc. Natl. Acad. Sci. U.S.A.">
        <title>Hypertension with or without adrenal hyperplasia due to different inherited mutations in the potassium channel KCNJ5.</title>
        <authorList>
            <person name="Scholl U.I."/>
            <person name="Nelson-Williams C."/>
            <person name="Yue P."/>
            <person name="Grekin R."/>
            <person name="Wyatt R.J."/>
            <person name="Dillon M.J."/>
            <person name="Couch R."/>
            <person name="Hammer L.K."/>
            <person name="Harley F.L."/>
            <person name="Farhi A."/>
            <person name="Wang W.H."/>
            <person name="Lifton R.P."/>
        </authorList>
    </citation>
    <scope>VARIANTS HALD3 ARG-151 AND GLU-151</scope>
</reference>
<reference key="18">
    <citation type="journal article" date="2013" name="J. Clin. Endocrinol. Metab.">
        <title>a Novel Y152C KCNJ5 mutation responsible for familial hyperaldosteronism type III.</title>
        <authorList>
            <person name="Monticone S."/>
            <person name="Hattangady N.G."/>
            <person name="Penton D."/>
            <person name="Isales C.M."/>
            <person name="Edwards M.A."/>
            <person name="Williams T.A."/>
            <person name="Sterner C."/>
            <person name="Warth R."/>
            <person name="Mulatero P."/>
            <person name="Rainey W.E."/>
        </authorList>
    </citation>
    <scope>VARIANT HALD3 CYS-152</scope>
    <scope>CHARACTERIZATION OF VARIANTS HALD3 GLU-151 AND CYS-152</scope>
    <scope>FUNCTION</scope>
    <scope>SUBCELLULAR LOCATION</scope>
    <scope>TRANSPORTER ACTIVITY</scope>
</reference>
<reference key="19">
    <citation type="journal article" date="2016" name="Clin. Endocrinol. (Oxf.)">
        <title>Functional characterization of two novel germline mutations of the KCNJ5 gene in hypertensive patients without primary aldosteronism but with ACTH-dependent aldosterone hypersecretion.</title>
        <authorList>
            <person name="Sertedaki A."/>
            <person name="Markou A."/>
            <person name="Vlachakis D."/>
            <person name="Kossida S."/>
            <person name="Campanac E."/>
            <person name="Hoffman D.A."/>
            <person name="Sierra M.L."/>
            <person name="Xekouki P."/>
            <person name="Stratakis C.A."/>
            <person name="Kaltsas G."/>
            <person name="Piaditis G.P."/>
            <person name="Chrousos G.P."/>
            <person name="Charmandari E."/>
        </authorList>
    </citation>
    <scope>VARIANTS MET-259 AND ASN-348</scope>
    <scope>CHARACTERIZATION OF VARIANTS MET-259 AND ASN-348</scope>
    <scope>INVOLVEMENT IN HYPERTENTION WITH ACTH-DEPENDENT ALDOSTERONE HYPERSECRETION</scope>
    <scope>FUNCTION</scope>
    <scope>TRANSPORTER ACTIVITY</scope>
</reference>
<reference key="20">
    <citation type="journal article" date="2016" name="J. Mol. Endocrinol.">
        <title>Mutated KCNJ5 activates the acute and chronic regulatory steps in aldosterone production.</title>
        <authorList>
            <person name="Hattangady N.G."/>
            <person name="Karashima S."/>
            <person name="Yuan L."/>
            <person name="Ponce-Balbuena D."/>
            <person name="Jalife J."/>
            <person name="Gomez-Sanchez C.E."/>
            <person name="Auchus R.J."/>
            <person name="Rainey W.E."/>
            <person name="Else T."/>
        </authorList>
    </citation>
    <scope>CHARACTERIZATION OF VARIANT HALD3 ALA-158</scope>
    <scope>FUNCTION</scope>
    <scope>TRANSPORTER ACTIVITY</scope>
</reference>
<feature type="chain" id="PRO_0000154934" description="G protein-activated inward rectifier potassium channel 4">
    <location>
        <begin position="1"/>
        <end position="419"/>
    </location>
</feature>
<feature type="topological domain" description="Cytoplasmic" evidence="1">
    <location>
        <begin position="1"/>
        <end position="86"/>
    </location>
</feature>
<feature type="transmembrane region" description="Helical; Name=M1" evidence="1">
    <location>
        <begin position="87"/>
        <end position="111"/>
    </location>
</feature>
<feature type="topological domain" description="Extracellular" evidence="1">
    <location>
        <begin position="112"/>
        <end position="135"/>
    </location>
</feature>
<feature type="intramembrane region" description="Helical; Pore-forming; Name=H5" evidence="1">
    <location>
        <begin position="136"/>
        <end position="147"/>
    </location>
</feature>
<feature type="intramembrane region" description="Pore-forming" evidence="1">
    <location>
        <begin position="148"/>
        <end position="154"/>
    </location>
</feature>
<feature type="topological domain" description="Extracellular" evidence="1">
    <location>
        <begin position="155"/>
        <end position="163"/>
    </location>
</feature>
<feature type="transmembrane region" description="Helical; Name=M2" evidence="1">
    <location>
        <begin position="164"/>
        <end position="185"/>
    </location>
</feature>
<feature type="topological domain" description="Cytoplasmic" evidence="1">
    <location>
        <begin position="186"/>
        <end position="419"/>
    </location>
</feature>
<feature type="region of interest" description="Disordered" evidence="5">
    <location>
        <begin position="390"/>
        <end position="419"/>
    </location>
</feature>
<feature type="short sequence motif" description="Selectivity filter" evidence="1">
    <location>
        <begin position="149"/>
        <end position="154"/>
    </location>
</feature>
<feature type="compositionally biased region" description="Acidic residues" evidence="5">
    <location>
        <begin position="394"/>
        <end position="405"/>
    </location>
</feature>
<feature type="site" description="Role in the control of polyamine-mediated channel gating and in the blocking by intracellular magnesium" evidence="1">
    <location>
        <position position="179"/>
    </location>
</feature>
<feature type="modified residue" description="Phosphoserine" evidence="2">
    <location>
        <position position="5"/>
    </location>
</feature>
<feature type="sequence variant" id="VAR_065929" description="In dbSNP:rs560269341." evidence="9">
    <original>R</original>
    <variation>H</variation>
    <location>
        <position position="39"/>
    </location>
</feature>
<feature type="sequence variant" id="VAR_069182" description="Found in aldosterone-producing adrenal adenoma samples; somatic mutation." evidence="15">
    <original>E</original>
    <variation>Q</variation>
    <location>
        <position position="145"/>
    </location>
</feature>
<feature type="sequence variant" id="VAR_067090" description="In HALD3; results in a profound alteration of channel function with loss of channel selectivity and membrane depolarization; dbSNP:rs587777437." evidence="10 12 16">
    <original>G</original>
    <variation>E</variation>
    <location>
        <position position="151"/>
    </location>
</feature>
<feature type="sequence variant" id="VAR_065930" description="In HALD3; detected as germline mutation in a kindred with severe primary aldosteronism and adrenocortical hyperplasia; also found as somatic mutation in aldosterone-producing adrenal adenoma samples; results in loss of channel selectivity and membrane depolarization; dbSNP:rs386352319." evidence="9 10 11 12 14 15">
    <original>G</original>
    <variation>R</variation>
    <location>
        <position position="151"/>
    </location>
</feature>
<feature type="sequence variant" id="VAR_077577" description="In HALD3; results in alteration of channel function with reduced channel selectivity and membrane depolarization; increases expression of CYP11B2 and its transcriptional regulator NR4A2." evidence="16">
    <original>Y</original>
    <variation>C</variation>
    <location>
        <position position="152"/>
    </location>
</feature>
<feature type="sequence variant" id="VAR_077578" description="In HALD3; loss of channel selectivity; dbSNP:rs587777438." evidence="14">
    <original>I</original>
    <variation>S</variation>
    <location>
        <position position="157"/>
    </location>
</feature>
<feature type="sequence variant" id="VAR_065931" description="In HALD3; also found in aldosterone-producing adrenal adenoma samples; results in loss of channel selectivity and membrane depolarization; increases expression of CYP11B2 and its transcriptional regulators NR4A2 and ATF2; increases aldosterone and hybrid steroids 18-oxocortisol and 18-hydroxycortisol synthesis; increases STAR expression and phosphorylation; dbSNP:rs387906778." evidence="9 10 13 14 17">
    <original>T</original>
    <variation>A</variation>
    <location>
        <position position="158"/>
    </location>
</feature>
<feature type="sequence variant" id="VAR_065932" description="Found in aldosterone-producing adrenal adenoma samples; somatic mutation; results in loss of channel selectivity and membrane depolarization; dbSNP:rs386352318." evidence="9 10 11 14 15">
    <original>L</original>
    <variation>R</variation>
    <location>
        <position position="168"/>
    </location>
</feature>
<feature type="sequence variant" id="VAR_065933" description="In dbSNP:rs138295501." evidence="9">
    <original>M</original>
    <variation>I</variation>
    <location>
        <position position="210"/>
    </location>
</feature>
<feature type="sequence variant" id="VAR_077579" description="Found in patients with hypertension with ACTH-dependent aldosterone hypersecretion; uncertain significance; no effect on channel function; dbSNP:rs759363415." evidence="18">
    <original>V</original>
    <variation>M</variation>
    <location>
        <position position="259"/>
    </location>
</feature>
<feature type="sequence variant" id="VAR_063107" description="In dbSNP:rs7102584." evidence="6 7 19 20 21 22">
    <original>Q</original>
    <variation>E</variation>
    <location>
        <position position="282"/>
    </location>
</feature>
<feature type="sequence variant" id="VAR_077580" description="Found in patients with hypertension with ACTH-dependent aldosterone hypersecretion; likely pathogenic; loss of channel selectivity." evidence="18">
    <original>Y</original>
    <variation>N</variation>
    <location>
        <position position="348"/>
    </location>
</feature>
<feature type="sequence variant" id="VAR_063766" description="In LQT13; dbSNP:rs199830292." evidence="8">
    <original>G</original>
    <variation>R</variation>
    <location>
        <position position="387"/>
    </location>
</feature>
<feature type="sequence conflict" description="In Ref. 5; AAB07045." evidence="23" ref="5">
    <original>I</original>
    <variation>T</variation>
    <location>
        <position position="35"/>
    </location>
</feature>
<feature type="sequence conflict" description="In Ref. 1; CAA58565." evidence="23" ref="1">
    <original>G</original>
    <variation>R</variation>
    <location>
        <position position="388"/>
    </location>
</feature>
<comment type="function">
    <text evidence="13 14 16 17 18 20 22">Inward rectifier potassium channels are characterized by a greater tendency to allow potassium to flow into the cell rather than out of it. Their voltage dependence is regulated by the concentration of extracellular potassium; as external potassium is raised, the voltage range of the channel opening shifts to more positive voltages. The inward rectification is mainly due to the blockage of outward current by internal magnesium. Can be blocked by external barium. This potassium channel is controlled by G proteins.</text>
</comment>
<comment type="catalytic activity">
    <reaction evidence="14 16 17 18 20 22">
        <text>K(+)(in) = K(+)(out)</text>
        <dbReference type="Rhea" id="RHEA:29463"/>
        <dbReference type="ChEBI" id="CHEBI:29103"/>
    </reaction>
</comment>
<comment type="activity regulation">
    <text evidence="3">Heteromultimer composed of KCNJ3/GIRK1 and KCNJ5/GIRK4 is activated by phosphatidylinositol 4,5 biphosphate (PtdIns(4,5)P2).</text>
</comment>
<comment type="subunit">
    <text evidence="3 6 20 22">Associates with KCNJ3/GIRK1 to form a G-protein-activated heteromultimer pore-forming unit. The resulting inward current is much larger (PubMed:8868049, PubMed:10659995, PubMed:8558261). Associates with KCNJ6/GIRK2 to form a G-protein-activated heteromultimer pore-forming unit (By similarity).</text>
</comment>
<comment type="interaction">
    <interactant intactId="EBI-9975563">
        <id>P48544</id>
    </interactant>
    <interactant intactId="EBI-7082607">
        <id>Q99712</id>
        <label>KCNJ15</label>
    </interactant>
    <organismsDiffer>false</organismsDiffer>
    <experiments>3</experiments>
</comment>
<comment type="subcellular location">
    <subcellularLocation>
        <location evidence="13 16">Membrane</location>
        <topology evidence="4">Multi-pass membrane protein</topology>
    </subcellularLocation>
</comment>
<comment type="tissue specificity">
    <text evidence="9">Islets, exocrine pancreas and heart. Expressed in the adrenal cortex, particularly the zona glomerulosa.</text>
</comment>
<comment type="disease" evidence="8">
    <disease id="DI-02771">
        <name>Long QT syndrome 13</name>
        <acronym>LQT13</acronym>
        <description>A heart disorder characterized by a prolonged QT interval on the ECG and polymorphic ventricular arrhythmias. They cause syncope and sudden death in response to exercise or emotional stress, and can present with a sentinel event of sudden cardiac death in infancy.</description>
        <dbReference type="MIM" id="613485"/>
    </disease>
    <text>The disease is caused by variants affecting the gene represented in this entry.</text>
</comment>
<comment type="disease" evidence="9 10 11 12 13 14 15 16 17">
    <disease id="DI-03198">
        <name>Hyperaldosteronism, familial, 3</name>
        <acronym>HALD3</acronym>
        <description>A form of hyperaldosteronism characterized by hypertension secondary to massive adrenal mineralocorticoid production. HALD3 patients present with childhood hypertension, elevated aldosteronism levels, and high levels of the hybrid steroids 18-oxocortisol and 18-hydroxycortisol. Hypertension and aldosteronism are not reversed by administration of exogenous glucocorticoids and patients require adrenalectomy to control hypertension.</description>
        <dbReference type="MIM" id="613677"/>
    </disease>
    <text>The disease is caused by variants affecting the gene represented in this entry.</text>
</comment>
<comment type="disease">
    <text evidence="9 10 11 15">Somatic mutations in KCNJ5 have been found in aldosterone-producing adrenal adenomas and can be responsible for aldosteronism associated with cell autonomous proliferation. APAs are typically solitary, well circumscribed tumors diagnosed between ages 30 and 70. They come to medical attention due to new or worsening hypertension, often with hypokalemia. The precise role of KCNJ5 mutations in APA is under debate. They produce increased sodium conductance and cell depolarization, which in adrenal glomerulosa cells produces calcium entry, the signal for aldosterone production and cell proliferation. However, they may not be causative of APA development but may be a consequence of tumorigenesis, playing only a contributory role toward aldosterone overproduction and tumor growth (PubMed:22275527). Somatic mutations in KCNJ5 have not been found in non-aldosterone secreting adrenal adenomas suggesting that they are specifically associated with APA (PubMed:22275527, PubMed:22848660).</text>
</comment>
<comment type="disease">
    <text evidence="18">Mutations in KCNJ5 are involved in the pathogenesis of hypertension without primary aldosteronism but with increased aldosterone response to ACTH stimulation.</text>
</comment>
<comment type="similarity">
    <text evidence="23">Belongs to the inward rectifier-type potassium channel (TC 1.A.2.1) family. KCNJ5 subfamily.</text>
</comment>
<accession>P48544</accession>
<accession>B2R744</accession>
<accession>Q6DK13</accession>
<accession>Q6DK14</accession>
<accession>Q92807</accession>
<protein>
    <recommendedName>
        <fullName>G protein-activated inward rectifier potassium channel 4</fullName>
        <shortName>GIRK-4</shortName>
    </recommendedName>
    <alternativeName>
        <fullName>Cardiac inward rectifier</fullName>
        <shortName>CIR</shortName>
    </alternativeName>
    <alternativeName>
        <fullName>Heart KATP channel</fullName>
    </alternativeName>
    <alternativeName>
        <fullName>Inward rectifier K(+) channel Kir3.4</fullName>
        <shortName>IRK-4</shortName>
    </alternativeName>
    <alternativeName>
        <fullName>KATP-1</fullName>
    </alternativeName>
    <alternativeName>
        <fullName>Potassium channel, inwardly rectifying subfamily J member 5</fullName>
    </alternativeName>
</protein>
<evidence type="ECO:0000250" key="1"/>
<evidence type="ECO:0000250" key="2">
    <source>
        <dbReference type="UniProtKB" id="P48542"/>
    </source>
</evidence>
<evidence type="ECO:0000250" key="3">
    <source>
        <dbReference type="UniProtKB" id="P48548"/>
    </source>
</evidence>
<evidence type="ECO:0000255" key="4"/>
<evidence type="ECO:0000256" key="5">
    <source>
        <dbReference type="SAM" id="MobiDB-lite"/>
    </source>
</evidence>
<evidence type="ECO:0000269" key="6">
    <source>
    </source>
</evidence>
<evidence type="ECO:0000269" key="7">
    <source>
    </source>
</evidence>
<evidence type="ECO:0000269" key="8">
    <source>
    </source>
</evidence>
<evidence type="ECO:0000269" key="9">
    <source>
    </source>
</evidence>
<evidence type="ECO:0000269" key="10">
    <source>
    </source>
</evidence>
<evidence type="ECO:0000269" key="11">
    <source>
    </source>
</evidence>
<evidence type="ECO:0000269" key="12">
    <source>
    </source>
</evidence>
<evidence type="ECO:0000269" key="13">
    <source>
    </source>
</evidence>
<evidence type="ECO:0000269" key="14">
    <source>
    </source>
</evidence>
<evidence type="ECO:0000269" key="15">
    <source>
    </source>
</evidence>
<evidence type="ECO:0000269" key="16">
    <source>
    </source>
</evidence>
<evidence type="ECO:0000269" key="17">
    <source>
    </source>
</evidence>
<evidence type="ECO:0000269" key="18">
    <source>
    </source>
</evidence>
<evidence type="ECO:0000269" key="19">
    <source>
    </source>
</evidence>
<evidence type="ECO:0000269" key="20">
    <source>
    </source>
</evidence>
<evidence type="ECO:0000269" key="21">
    <source>
    </source>
</evidence>
<evidence type="ECO:0000269" key="22">
    <source>
    </source>
</evidence>
<evidence type="ECO:0000305" key="23"/>
<gene>
    <name type="primary">KCNJ5</name>
    <name type="synonym">GIRK4</name>
</gene>